<comment type="function">
    <text evidence="1">Component of the cytosolic iron-sulfur (Fe-S) protein assembly (CIA) machinery required for the maturation of extramitochondrial Fe-S proteins. Part of an electron transfer chain functioning in an early step of cytosolic Fe-S biogenesis, facilitating the de novo assembly of a [4Fe-4S] cluster on the scaffold complex CFD1-NBP35. Electrons are transferred to DRE2 from NADPH via the FAD- and FMN-containing protein TAH18. TAH18-DRE2 are also required for the assembly of the diferric tyrosyl radical cofactor of ribonucleotide reductase (RNR), probably by providing electrons for reduction during radical cofactor maturation in the catalytic small subunit RNR2.</text>
</comment>
<comment type="cofactor">
    <cofactor evidence="1">
        <name>[2Fe-2S] cluster</name>
        <dbReference type="ChEBI" id="CHEBI:190135"/>
    </cofactor>
</comment>
<comment type="cofactor">
    <cofactor evidence="1">
        <name>[4Fe-4S] cluster</name>
        <dbReference type="ChEBI" id="CHEBI:49883"/>
    </cofactor>
</comment>
<comment type="subunit">
    <text evidence="1">Monomer. Interacts with TAH18. Interacts with MIA40.</text>
</comment>
<comment type="subcellular location">
    <subcellularLocation>
        <location evidence="1">Cytoplasm</location>
    </subcellularLocation>
    <subcellularLocation>
        <location evidence="1">Mitochondrion intermembrane space</location>
    </subcellularLocation>
</comment>
<comment type="domain">
    <text evidence="1">The C-terminal domain binds 2 Fe-S clusters but is otherwise mostly in an intrinsically disordered conformation.</text>
</comment>
<comment type="domain">
    <text evidence="1">The N-terminal domain has structural similarity with S-adenosyl-L-methionine-dependent methyltransferases, but does not bind S-adenosyl-L-methionine. It is required for correct assembly of the 2 Fe-S clusters.</text>
</comment>
<comment type="domain">
    <text evidence="1">The twin Cx2C motifs are involved in the recognition by the mitochondrial MIA40-ERV1 disulfide relay system. The formation of 2 disulfide bonds in the Cx2C motifs through dithiol/disulfide exchange reactions effectively traps the protein in the mitochondrial intermembrane space.</text>
</comment>
<comment type="similarity">
    <text evidence="1">Belongs to the anamorsin family.</text>
</comment>
<protein>
    <recommendedName>
        <fullName evidence="1">Fe-S cluster assembly protein DRE2</fullName>
    </recommendedName>
    <alternativeName>
        <fullName evidence="1">Anamorsin homolog</fullName>
    </alternativeName>
</protein>
<reference key="1">
    <citation type="journal article" date="2008" name="Genome Biol.">
        <title>The genome sequence of the model ascomycete fungus Podospora anserina.</title>
        <authorList>
            <person name="Espagne E."/>
            <person name="Lespinet O."/>
            <person name="Malagnac F."/>
            <person name="Da Silva C."/>
            <person name="Jaillon O."/>
            <person name="Porcel B.M."/>
            <person name="Couloux A."/>
            <person name="Aury J.-M."/>
            <person name="Segurens B."/>
            <person name="Poulain J."/>
            <person name="Anthouard V."/>
            <person name="Grossetete S."/>
            <person name="Khalili H."/>
            <person name="Coppin E."/>
            <person name="Dequard-Chablat M."/>
            <person name="Picard M."/>
            <person name="Contamine V."/>
            <person name="Arnaise S."/>
            <person name="Bourdais A."/>
            <person name="Berteaux-Lecellier V."/>
            <person name="Gautheret D."/>
            <person name="de Vries R.P."/>
            <person name="Battaglia E."/>
            <person name="Coutinho P.M."/>
            <person name="Danchin E.G.J."/>
            <person name="Henrissat B."/>
            <person name="El Khoury R."/>
            <person name="Sainsard-Chanet A."/>
            <person name="Boivin A."/>
            <person name="Pinan-Lucarre B."/>
            <person name="Sellem C.H."/>
            <person name="Debuchy R."/>
            <person name="Wincker P."/>
            <person name="Weissenbach J."/>
            <person name="Silar P."/>
        </authorList>
    </citation>
    <scope>NUCLEOTIDE SEQUENCE [LARGE SCALE GENOMIC DNA]</scope>
    <source>
        <strain>S / ATCC MYA-4624 / DSM 980 / FGSC 10383</strain>
    </source>
</reference>
<reference key="2">
    <citation type="journal article" date="2014" name="Genetics">
        <title>Maintaining two mating types: Structure of the mating type locus and its role in heterokaryosis in Podospora anserina.</title>
        <authorList>
            <person name="Grognet P."/>
            <person name="Bidard F."/>
            <person name="Kuchly C."/>
            <person name="Tong L.C.H."/>
            <person name="Coppin E."/>
            <person name="Benkhali J.A."/>
            <person name="Couloux A."/>
            <person name="Wincker P."/>
            <person name="Debuchy R."/>
            <person name="Silar P."/>
        </authorList>
    </citation>
    <scope>GENOME REANNOTATION</scope>
    <source>
        <strain>S / ATCC MYA-4624 / DSM 980 / FGSC 10383</strain>
    </source>
</reference>
<feature type="chain" id="PRO_0000392402" description="Fe-S cluster assembly protein DRE2">
    <location>
        <begin position="1"/>
        <end position="345"/>
    </location>
</feature>
<feature type="region of interest" description="N-terminal SAM-like domain" evidence="1">
    <location>
        <begin position="29"/>
        <end position="163"/>
    </location>
</feature>
<feature type="region of interest" description="Linker" evidence="1">
    <location>
        <begin position="164"/>
        <end position="237"/>
    </location>
</feature>
<feature type="region of interest" description="Fe-S binding site A" evidence="1">
    <location>
        <begin position="247"/>
        <end position="263"/>
    </location>
</feature>
<feature type="region of interest" description="Fe-S binding site B" evidence="1">
    <location>
        <begin position="308"/>
        <end position="322"/>
    </location>
</feature>
<feature type="short sequence motif" description="Cx2C motif 1" evidence="1">
    <location>
        <begin position="308"/>
        <end position="311"/>
    </location>
</feature>
<feature type="short sequence motif" description="Cx2C motif 2" evidence="1">
    <location>
        <begin position="319"/>
        <end position="322"/>
    </location>
</feature>
<feature type="binding site" evidence="1">
    <location>
        <position position="247"/>
    </location>
    <ligand>
        <name>[2Fe-2S] cluster</name>
        <dbReference type="ChEBI" id="CHEBI:190135"/>
    </ligand>
</feature>
<feature type="binding site" evidence="1">
    <location>
        <position position="258"/>
    </location>
    <ligand>
        <name>[2Fe-2S] cluster</name>
        <dbReference type="ChEBI" id="CHEBI:190135"/>
    </ligand>
</feature>
<feature type="binding site" evidence="1">
    <location>
        <position position="261"/>
    </location>
    <ligand>
        <name>[2Fe-2S] cluster</name>
        <dbReference type="ChEBI" id="CHEBI:190135"/>
    </ligand>
</feature>
<feature type="binding site" evidence="1">
    <location>
        <position position="263"/>
    </location>
    <ligand>
        <name>[2Fe-2S] cluster</name>
        <dbReference type="ChEBI" id="CHEBI:190135"/>
    </ligand>
</feature>
<feature type="binding site" evidence="1">
    <location>
        <position position="308"/>
    </location>
    <ligand>
        <name>[4Fe-4S] cluster</name>
        <dbReference type="ChEBI" id="CHEBI:49883"/>
    </ligand>
</feature>
<feature type="binding site" evidence="1">
    <location>
        <position position="311"/>
    </location>
    <ligand>
        <name>[4Fe-4S] cluster</name>
        <dbReference type="ChEBI" id="CHEBI:49883"/>
    </ligand>
</feature>
<feature type="binding site" evidence="1">
    <location>
        <position position="319"/>
    </location>
    <ligand>
        <name>[4Fe-4S] cluster</name>
        <dbReference type="ChEBI" id="CHEBI:49883"/>
    </ligand>
</feature>
<feature type="binding site" evidence="1">
    <location>
        <position position="322"/>
    </location>
    <ligand>
        <name>[4Fe-4S] cluster</name>
        <dbReference type="ChEBI" id="CHEBI:49883"/>
    </ligand>
</feature>
<dbReference type="EMBL" id="CU640366">
    <property type="protein sequence ID" value="CAP73641.1"/>
    <property type="molecule type" value="Genomic_DNA"/>
</dbReference>
<dbReference type="EMBL" id="FO904937">
    <property type="protein sequence ID" value="CDP26044.1"/>
    <property type="molecule type" value="Genomic_DNA"/>
</dbReference>
<dbReference type="RefSeq" id="XP_001911813.1">
    <property type="nucleotide sequence ID" value="XM_001911778.1"/>
</dbReference>
<dbReference type="STRING" id="515849.B2B763"/>
<dbReference type="GeneID" id="6195505"/>
<dbReference type="KEGG" id="pan:PODANSg8858"/>
<dbReference type="VEuPathDB" id="FungiDB:PODANS_2_10040"/>
<dbReference type="eggNOG" id="KOG4020">
    <property type="taxonomic scope" value="Eukaryota"/>
</dbReference>
<dbReference type="HOGENOM" id="CLU_067152_1_0_1"/>
<dbReference type="InParanoid" id="B2B763"/>
<dbReference type="OrthoDB" id="311633at2759"/>
<dbReference type="Proteomes" id="UP000001197">
    <property type="component" value="Chromosome 2"/>
</dbReference>
<dbReference type="GO" id="GO:0005758">
    <property type="term" value="C:mitochondrial intermembrane space"/>
    <property type="evidence" value="ECO:0007669"/>
    <property type="project" value="UniProtKB-SubCell"/>
</dbReference>
<dbReference type="GO" id="GO:0051537">
    <property type="term" value="F:2 iron, 2 sulfur cluster binding"/>
    <property type="evidence" value="ECO:0007669"/>
    <property type="project" value="UniProtKB-UniRule"/>
</dbReference>
<dbReference type="GO" id="GO:0051539">
    <property type="term" value="F:4 iron, 4 sulfur cluster binding"/>
    <property type="evidence" value="ECO:0007669"/>
    <property type="project" value="UniProtKB-KW"/>
</dbReference>
<dbReference type="GO" id="GO:0009055">
    <property type="term" value="F:electron transfer activity"/>
    <property type="evidence" value="ECO:0007669"/>
    <property type="project" value="UniProtKB-UniRule"/>
</dbReference>
<dbReference type="GO" id="GO:0046872">
    <property type="term" value="F:metal ion binding"/>
    <property type="evidence" value="ECO:0007669"/>
    <property type="project" value="UniProtKB-KW"/>
</dbReference>
<dbReference type="GO" id="GO:0016226">
    <property type="term" value="P:iron-sulfur cluster assembly"/>
    <property type="evidence" value="ECO:0007669"/>
    <property type="project" value="UniProtKB-UniRule"/>
</dbReference>
<dbReference type="HAMAP" id="MF_03115">
    <property type="entry name" value="Anamorsin"/>
    <property type="match status" value="1"/>
</dbReference>
<dbReference type="InterPro" id="IPR007785">
    <property type="entry name" value="Anamorsin"/>
</dbReference>
<dbReference type="InterPro" id="IPR046408">
    <property type="entry name" value="CIAPIN1"/>
</dbReference>
<dbReference type="InterPro" id="IPR031838">
    <property type="entry name" value="Dre2_N"/>
</dbReference>
<dbReference type="PANTHER" id="PTHR13273">
    <property type="entry name" value="ANAMORSIN"/>
    <property type="match status" value="1"/>
</dbReference>
<dbReference type="PANTHER" id="PTHR13273:SF14">
    <property type="entry name" value="ANAMORSIN"/>
    <property type="match status" value="1"/>
</dbReference>
<dbReference type="Pfam" id="PF05093">
    <property type="entry name" value="CIAPIN1"/>
    <property type="match status" value="1"/>
</dbReference>
<dbReference type="Pfam" id="PF16803">
    <property type="entry name" value="DRE2_N"/>
    <property type="match status" value="1"/>
</dbReference>
<organism>
    <name type="scientific">Podospora anserina (strain S / ATCC MYA-4624 / DSM 980 / FGSC 10383)</name>
    <name type="common">Pleurage anserina</name>
    <dbReference type="NCBI Taxonomy" id="515849"/>
    <lineage>
        <taxon>Eukaryota</taxon>
        <taxon>Fungi</taxon>
        <taxon>Dikarya</taxon>
        <taxon>Ascomycota</taxon>
        <taxon>Pezizomycotina</taxon>
        <taxon>Sordariomycetes</taxon>
        <taxon>Sordariomycetidae</taxon>
        <taxon>Sordariales</taxon>
        <taxon>Podosporaceae</taxon>
        <taxon>Podospora</taxon>
        <taxon>Podospora anserina</taxon>
    </lineage>
</organism>
<sequence>MPPAAVMIDTTPDFDFSPAHAAAAASAKGDSGDRTLLLAPPSIASREDRLTSLFSVYDRSSTDLQMLDRLAAGLVSLPAKTYDLILVLTDPDGSRRSEVSPLLSNREIWGKVVPALKAGGTLRSEDGSLGQGNSIEEKEAILAGLVLGDDGYTKPDYAEQEVVPLRFGAKKVNADGSVPLSFGKKAAAAPAPAPAPAPVSKGPAGVGFIDFSDDLDLDAEDDDDVIDEDTLLTEADLKRPIQQPPECAPQPGKKRRACKDCTCGLAERIAAEDKARREKAEKGLATLKLKSEDLSELDFTVQGKTGSCNSCYLGDAFRCADCPYIGLPAFKPGEQVKILNNTAQI</sequence>
<name>DRE2_PODAN</name>
<accession>B2B763</accession>
<accession>A0A090CJS6</accession>
<proteinExistence type="inferred from homology"/>
<gene>
    <name evidence="1" type="primary">DRE2</name>
    <name type="ordered locus">Pa_2_10040</name>
    <name type="ORF">PODANS_2_10040</name>
</gene>
<evidence type="ECO:0000255" key="1">
    <source>
        <dbReference type="HAMAP-Rule" id="MF_03115"/>
    </source>
</evidence>
<keyword id="KW-0001">2Fe-2S</keyword>
<keyword id="KW-0004">4Fe-4S</keyword>
<keyword id="KW-0963">Cytoplasm</keyword>
<keyword id="KW-0408">Iron</keyword>
<keyword id="KW-0411">Iron-sulfur</keyword>
<keyword id="KW-0479">Metal-binding</keyword>
<keyword id="KW-0496">Mitochondrion</keyword>
<keyword id="KW-1185">Reference proteome</keyword>